<organism>
    <name type="scientific">Caulobacter sp. (strain K31)</name>
    <dbReference type="NCBI Taxonomy" id="366602"/>
    <lineage>
        <taxon>Bacteria</taxon>
        <taxon>Pseudomonadati</taxon>
        <taxon>Pseudomonadota</taxon>
        <taxon>Alphaproteobacteria</taxon>
        <taxon>Caulobacterales</taxon>
        <taxon>Caulobacteraceae</taxon>
        <taxon>Caulobacter</taxon>
    </lineage>
</organism>
<accession>B0T0B1</accession>
<gene>
    <name type="ordered locus">Caul_1427</name>
</gene>
<reference key="1">
    <citation type="submission" date="2008-01" db="EMBL/GenBank/DDBJ databases">
        <title>Complete sequence of chromosome of Caulobacter sp. K31.</title>
        <authorList>
            <consortium name="US DOE Joint Genome Institute"/>
            <person name="Copeland A."/>
            <person name="Lucas S."/>
            <person name="Lapidus A."/>
            <person name="Barry K."/>
            <person name="Glavina del Rio T."/>
            <person name="Dalin E."/>
            <person name="Tice H."/>
            <person name="Pitluck S."/>
            <person name="Bruce D."/>
            <person name="Goodwin L."/>
            <person name="Thompson L.S."/>
            <person name="Brettin T."/>
            <person name="Detter J.C."/>
            <person name="Han C."/>
            <person name="Schmutz J."/>
            <person name="Larimer F."/>
            <person name="Land M."/>
            <person name="Hauser L."/>
            <person name="Kyrpides N."/>
            <person name="Kim E."/>
            <person name="Stephens C."/>
            <person name="Richardson P."/>
        </authorList>
    </citation>
    <scope>NUCLEOTIDE SEQUENCE [LARGE SCALE GENOMIC DNA]</scope>
    <source>
        <strain>K31</strain>
    </source>
</reference>
<reference key="2">
    <citation type="journal article" date="2014" name="Biochemistry">
        <title>Discovery of function in the enolase superfamily: D-mannonate and D-gluconate dehydratases in the D-mannonate dehydratase subgroup.</title>
        <authorList>
            <person name="Wichelecki D.J."/>
            <person name="Balthazor B.M."/>
            <person name="Chau A.C."/>
            <person name="Vetting M.W."/>
            <person name="Fedorov A.A."/>
            <person name="Fedorov E.V."/>
            <person name="Lukk T."/>
            <person name="Patskovsky Y.V."/>
            <person name="Stead M.B."/>
            <person name="Hillerich B.S."/>
            <person name="Seidel R.D."/>
            <person name="Almo S.C."/>
            <person name="Gerlt J.A."/>
        </authorList>
    </citation>
    <scope>X-RAY CRYSTALLOGRAPHY (2.00 ANGSTROMS) IN COMPLEX WITH MAGNESIUM</scope>
    <scope>FUNCTION</scope>
    <scope>CATALYTIC ACTIVITY</scope>
    <scope>COFACTOR</scope>
    <scope>BIOPHYSICOCHEMICAL PROPERTIES</scope>
    <source>
        <strain>K31</strain>
    </source>
</reference>
<evidence type="ECO:0000250" key="1"/>
<evidence type="ECO:0000269" key="2">
    <source>
    </source>
</evidence>
<evidence type="ECO:0000305" key="3"/>
<evidence type="ECO:0007829" key="4">
    <source>
        <dbReference type="PDB" id="4FI4"/>
    </source>
</evidence>
<protein>
    <recommendedName>
        <fullName>D-mannonate dehydratase Caul1427</fullName>
        <shortName>ManD</shortName>
        <ecNumber>4.2.1.8</ecNumber>
    </recommendedName>
</protein>
<sequence length="403" mass="44661">MLKIIDAKVIVTCPGRNFVTLKITTSDGVTGVGDATLNGRELAVVSYLRDHMIPCLIGRDAHRIEDVWQFFYRGSYWRGGPVAMTALAAVDMALWDIKAKLAGMPLYQLLGGACREGVMVYGHANGETIEDTIAEARKYQALGYKAIRLQSGVPGLPSTYGVSGDKMFYEPADGNLPTENVWSTSKYLKHAPKLFEAAREALGDDVHLLHDVHHRLTPIEAGRLGKDLEPYRLFWLEDAVPAENQAGFRLIRQHTTTPLAVGEIFSHVWDCKQLIEEQLIDYLRATVLHAGGITNLRKIAAFADLHHVRTGCHGATDLSPITMAAALHFDLSVSNFGLQEYMRHTPETDAVFPHAYSYKDGMLHPGEAPGLGVDIDEALAGQYPYKRAYLPVNRLEDGTMYNW</sequence>
<feature type="chain" id="PRO_0000429876" description="D-mannonate dehydratase Caul1427">
    <location>
        <begin position="1"/>
        <end position="403"/>
    </location>
</feature>
<feature type="active site" description="Proton donor/acceptor" evidence="1">
    <location>
        <position position="160"/>
    </location>
</feature>
<feature type="active site" description="Proton donor/acceptor" evidence="1">
    <location>
        <position position="213"/>
    </location>
</feature>
<feature type="binding site" evidence="1">
    <location>
        <position position="38"/>
    </location>
    <ligand>
        <name>substrate</name>
    </ligand>
</feature>
<feature type="binding site" evidence="1">
    <location>
        <position position="123"/>
    </location>
    <ligand>
        <name>substrate</name>
    </ligand>
</feature>
<feature type="binding site" evidence="2">
    <location>
        <position position="211"/>
    </location>
    <ligand>
        <name>Mg(2+)</name>
        <dbReference type="ChEBI" id="CHEBI:18420"/>
    </ligand>
</feature>
<feature type="binding site" evidence="2">
    <location>
        <position position="237"/>
    </location>
    <ligand>
        <name>Mg(2+)</name>
        <dbReference type="ChEBI" id="CHEBI:18420"/>
    </ligand>
</feature>
<feature type="binding site" evidence="2">
    <location>
        <position position="263"/>
    </location>
    <ligand>
        <name>Mg(2+)</name>
        <dbReference type="ChEBI" id="CHEBI:18420"/>
    </ligand>
</feature>
<feature type="binding site" evidence="1">
    <location>
        <position position="263"/>
    </location>
    <ligand>
        <name>substrate</name>
    </ligand>
</feature>
<feature type="binding site" evidence="1">
    <location>
        <position position="284"/>
    </location>
    <ligand>
        <name>substrate</name>
    </ligand>
</feature>
<feature type="binding site" evidence="1">
    <location>
        <position position="313"/>
    </location>
    <ligand>
        <name>substrate</name>
    </ligand>
</feature>
<feature type="binding site" evidence="1">
    <location>
        <position position="317"/>
    </location>
    <ligand>
        <name>substrate</name>
    </ligand>
</feature>
<feature type="binding site" evidence="1">
    <location>
        <position position="340"/>
    </location>
    <ligand>
        <name>substrate</name>
    </ligand>
</feature>
<feature type="site" description="Important for activity and substrate specificity; Ala is observed in family members with high D-mannonate dehydratase activity that have no activity with D-gluconate" evidence="1">
    <location>
        <position position="315"/>
    </location>
</feature>
<feature type="strand" evidence="4">
    <location>
        <begin position="3"/>
        <end position="12"/>
    </location>
</feature>
<feature type="strand" evidence="4">
    <location>
        <begin position="14"/>
        <end position="16"/>
    </location>
</feature>
<feature type="strand" evidence="4">
    <location>
        <begin position="18"/>
        <end position="25"/>
    </location>
</feature>
<feature type="strand" evidence="4">
    <location>
        <begin position="30"/>
        <end position="34"/>
    </location>
</feature>
<feature type="helix" evidence="4">
    <location>
        <begin position="41"/>
        <end position="50"/>
    </location>
</feature>
<feature type="helix" evidence="4">
    <location>
        <begin position="52"/>
        <end position="56"/>
    </location>
</feature>
<feature type="helix" evidence="4">
    <location>
        <begin position="64"/>
        <end position="74"/>
    </location>
</feature>
<feature type="helix" evidence="4">
    <location>
        <begin position="81"/>
        <end position="102"/>
    </location>
</feature>
<feature type="helix" evidence="4">
    <location>
        <begin position="106"/>
        <end position="109"/>
    </location>
</feature>
<feature type="strand" evidence="4">
    <location>
        <begin position="114"/>
        <end position="128"/>
    </location>
</feature>
<feature type="helix" evidence="4">
    <location>
        <begin position="129"/>
        <end position="141"/>
    </location>
</feature>
<feature type="strand" evidence="4">
    <location>
        <begin position="145"/>
        <end position="151"/>
    </location>
</feature>
<feature type="strand" evidence="4">
    <location>
        <begin position="166"/>
        <end position="168"/>
    </location>
</feature>
<feature type="strand" evidence="4">
    <location>
        <begin position="174"/>
        <end position="176"/>
    </location>
</feature>
<feature type="strand" evidence="4">
    <location>
        <begin position="179"/>
        <end position="182"/>
    </location>
</feature>
<feature type="helix" evidence="4">
    <location>
        <begin position="184"/>
        <end position="202"/>
    </location>
</feature>
<feature type="strand" evidence="4">
    <location>
        <begin position="204"/>
        <end position="211"/>
    </location>
</feature>
<feature type="helix" evidence="4">
    <location>
        <begin position="218"/>
        <end position="228"/>
    </location>
</feature>
<feature type="helix" evidence="4">
    <location>
        <begin position="229"/>
        <end position="231"/>
    </location>
</feature>
<feature type="strand" evidence="4">
    <location>
        <begin position="234"/>
        <end position="237"/>
    </location>
</feature>
<feature type="helix" evidence="4">
    <location>
        <begin position="245"/>
        <end position="247"/>
    </location>
</feature>
<feature type="helix" evidence="4">
    <location>
        <begin position="248"/>
        <end position="254"/>
    </location>
</feature>
<feature type="strand" evidence="4">
    <location>
        <begin position="259"/>
        <end position="261"/>
    </location>
</feature>
<feature type="helix" evidence="4">
    <location>
        <begin position="268"/>
        <end position="270"/>
    </location>
</feature>
<feature type="helix" evidence="4">
    <location>
        <begin position="272"/>
        <end position="276"/>
    </location>
</feature>
<feature type="strand" evidence="4">
    <location>
        <begin position="281"/>
        <end position="283"/>
    </location>
</feature>
<feature type="turn" evidence="4">
    <location>
        <begin position="287"/>
        <end position="291"/>
    </location>
</feature>
<feature type="helix" evidence="4">
    <location>
        <begin position="292"/>
        <end position="303"/>
    </location>
</feature>
<feature type="helix" evidence="4">
    <location>
        <begin position="304"/>
        <end position="306"/>
    </location>
</feature>
<feature type="helix" evidence="4">
    <location>
        <begin position="320"/>
        <end position="332"/>
    </location>
</feature>
<feature type="helix" evidence="4">
    <location>
        <begin position="346"/>
        <end position="351"/>
    </location>
</feature>
<feature type="strand" evidence="4">
    <location>
        <begin position="357"/>
        <end position="359"/>
    </location>
</feature>
<feature type="strand" evidence="4">
    <location>
        <begin position="362"/>
        <end position="364"/>
    </location>
</feature>
<feature type="strand" evidence="4">
    <location>
        <begin position="367"/>
        <end position="370"/>
    </location>
</feature>
<feature type="helix" evidence="4">
    <location>
        <begin position="377"/>
        <end position="380"/>
    </location>
</feature>
<feature type="strand" evidence="4">
    <location>
        <begin position="392"/>
        <end position="395"/>
    </location>
</feature>
<dbReference type="EC" id="4.2.1.8"/>
<dbReference type="EMBL" id="CP000927">
    <property type="protein sequence ID" value="ABZ70557.1"/>
    <property type="molecule type" value="Genomic_DNA"/>
</dbReference>
<dbReference type="PDB" id="4FI4">
    <property type="method" value="X-ray"/>
    <property type="resolution" value="2.00 A"/>
    <property type="chains" value="A/B/C=1-403"/>
</dbReference>
<dbReference type="PDBsum" id="4FI4"/>
<dbReference type="SMR" id="B0T0B1"/>
<dbReference type="STRING" id="366602.Caul_1427"/>
<dbReference type="KEGG" id="cak:Caul_1427"/>
<dbReference type="eggNOG" id="COG4948">
    <property type="taxonomic scope" value="Bacteria"/>
</dbReference>
<dbReference type="HOGENOM" id="CLU_030273_6_1_5"/>
<dbReference type="OrthoDB" id="9802699at2"/>
<dbReference type="UniPathway" id="UPA00246"/>
<dbReference type="EvolutionaryTrace" id="B0T0B1"/>
<dbReference type="GO" id="GO:0000287">
    <property type="term" value="F:magnesium ion binding"/>
    <property type="evidence" value="ECO:0000314"/>
    <property type="project" value="UniProtKB"/>
</dbReference>
<dbReference type="GO" id="GO:0008927">
    <property type="term" value="F:mannonate dehydratase activity"/>
    <property type="evidence" value="ECO:0000314"/>
    <property type="project" value="CACAO"/>
</dbReference>
<dbReference type="GO" id="GO:0009063">
    <property type="term" value="P:amino acid catabolic process"/>
    <property type="evidence" value="ECO:0007669"/>
    <property type="project" value="InterPro"/>
</dbReference>
<dbReference type="GO" id="GO:0016052">
    <property type="term" value="P:carbohydrate catabolic process"/>
    <property type="evidence" value="ECO:0000314"/>
    <property type="project" value="UniProtKB"/>
</dbReference>
<dbReference type="FunFam" id="3.20.20.120:FF:000004">
    <property type="entry name" value="D-galactonate dehydratase family protein"/>
    <property type="match status" value="1"/>
</dbReference>
<dbReference type="FunFam" id="3.30.390.10:FF:000002">
    <property type="entry name" value="D-galactonate dehydratase family protein"/>
    <property type="match status" value="1"/>
</dbReference>
<dbReference type="Gene3D" id="3.20.20.120">
    <property type="entry name" value="Enolase-like C-terminal domain"/>
    <property type="match status" value="1"/>
</dbReference>
<dbReference type="Gene3D" id="3.30.390.10">
    <property type="entry name" value="Enolase-like, N-terminal domain"/>
    <property type="match status" value="1"/>
</dbReference>
<dbReference type="InterPro" id="IPR034589">
    <property type="entry name" value="D-mannonate_dehydratase-like"/>
</dbReference>
<dbReference type="InterPro" id="IPR053379">
    <property type="entry name" value="D-mannonate_dehydratase_GalD"/>
</dbReference>
<dbReference type="InterPro" id="IPR034593">
    <property type="entry name" value="DgoD-like"/>
</dbReference>
<dbReference type="InterPro" id="IPR036849">
    <property type="entry name" value="Enolase-like_C_sf"/>
</dbReference>
<dbReference type="InterPro" id="IPR029017">
    <property type="entry name" value="Enolase-like_N"/>
</dbReference>
<dbReference type="InterPro" id="IPR029065">
    <property type="entry name" value="Enolase_C-like"/>
</dbReference>
<dbReference type="InterPro" id="IPR034587">
    <property type="entry name" value="MAND"/>
</dbReference>
<dbReference type="InterPro" id="IPR018110">
    <property type="entry name" value="Mandel_Rmase/mucon_lact_enz_CS"/>
</dbReference>
<dbReference type="InterPro" id="IPR013342">
    <property type="entry name" value="Mandelate_racemase_C"/>
</dbReference>
<dbReference type="InterPro" id="IPR013341">
    <property type="entry name" value="Mandelate_racemase_N_dom"/>
</dbReference>
<dbReference type="NCBIfam" id="NF043051">
    <property type="entry name" value="ManoateDhtManD"/>
    <property type="match status" value="1"/>
</dbReference>
<dbReference type="NCBIfam" id="NF011654">
    <property type="entry name" value="PRK15072.1"/>
    <property type="match status" value="1"/>
</dbReference>
<dbReference type="PANTHER" id="PTHR48080">
    <property type="entry name" value="D-GALACTONATE DEHYDRATASE-RELATED"/>
    <property type="match status" value="1"/>
</dbReference>
<dbReference type="PANTHER" id="PTHR48080:SF6">
    <property type="entry name" value="STARVATION-SENSING PROTEIN RSPA"/>
    <property type="match status" value="1"/>
</dbReference>
<dbReference type="Pfam" id="PF13378">
    <property type="entry name" value="MR_MLE_C"/>
    <property type="match status" value="1"/>
</dbReference>
<dbReference type="Pfam" id="PF02746">
    <property type="entry name" value="MR_MLE_N"/>
    <property type="match status" value="1"/>
</dbReference>
<dbReference type="SFLD" id="SFLDF00001">
    <property type="entry name" value="mannonate_dehydratase"/>
    <property type="match status" value="1"/>
</dbReference>
<dbReference type="SFLD" id="SFLDG00033">
    <property type="entry name" value="mannonate_dehydratase"/>
    <property type="match status" value="1"/>
</dbReference>
<dbReference type="SMART" id="SM00922">
    <property type="entry name" value="MR_MLE"/>
    <property type="match status" value="1"/>
</dbReference>
<dbReference type="SUPFAM" id="SSF51604">
    <property type="entry name" value="Enolase C-terminal domain-like"/>
    <property type="match status" value="1"/>
</dbReference>
<dbReference type="SUPFAM" id="SSF54826">
    <property type="entry name" value="Enolase N-terminal domain-like"/>
    <property type="match status" value="1"/>
</dbReference>
<dbReference type="PROSITE" id="PS00908">
    <property type="entry name" value="MR_MLE_1"/>
    <property type="match status" value="1"/>
</dbReference>
<proteinExistence type="evidence at protein level"/>
<keyword id="KW-0002">3D-structure</keyword>
<keyword id="KW-0119">Carbohydrate metabolism</keyword>
<keyword id="KW-0456">Lyase</keyword>
<keyword id="KW-0460">Magnesium</keyword>
<keyword id="KW-0479">Metal-binding</keyword>
<name>MAND1_CAUSK</name>
<comment type="function">
    <text evidence="2">Catalyzes the dehydration of D-mannonate. Has no detectable activity with a panel of 70 other acid sugars (in vitro).</text>
</comment>
<comment type="catalytic activity">
    <reaction evidence="2">
        <text>D-mannonate = 2-dehydro-3-deoxy-D-gluconate + H2O</text>
        <dbReference type="Rhea" id="RHEA:20097"/>
        <dbReference type="ChEBI" id="CHEBI:15377"/>
        <dbReference type="ChEBI" id="CHEBI:17767"/>
        <dbReference type="ChEBI" id="CHEBI:57990"/>
        <dbReference type="EC" id="4.2.1.8"/>
    </reaction>
</comment>
<comment type="cofactor">
    <cofactor evidence="2">
        <name>Mg(2+)</name>
        <dbReference type="ChEBI" id="CHEBI:18420"/>
    </cofactor>
    <text evidence="2">Binds 1 Mg(2+) ion per subunit.</text>
</comment>
<comment type="biophysicochemical properties">
    <kinetics>
        <text evidence="2">kcat is 2.0 sec(-1) with D-mannonate.</text>
    </kinetics>
</comment>
<comment type="pathway">
    <text>Carbohydrate metabolism; pentose and glucuronate interconversion.</text>
</comment>
<comment type="similarity">
    <text evidence="3">Belongs to the mandelate racemase/muconate lactonizing enzyme family. GalD subfamily.</text>
</comment>